<reference key="1">
    <citation type="submission" date="2007-07" db="EMBL/GenBank/DDBJ databases">
        <title>Complete sequence of chromosome of Shewanella baltica OS185.</title>
        <authorList>
            <consortium name="US DOE Joint Genome Institute"/>
            <person name="Copeland A."/>
            <person name="Lucas S."/>
            <person name="Lapidus A."/>
            <person name="Barry K."/>
            <person name="Glavina del Rio T."/>
            <person name="Dalin E."/>
            <person name="Tice H."/>
            <person name="Pitluck S."/>
            <person name="Sims D."/>
            <person name="Brettin T."/>
            <person name="Bruce D."/>
            <person name="Detter J.C."/>
            <person name="Han C."/>
            <person name="Schmutz J."/>
            <person name="Larimer F."/>
            <person name="Land M."/>
            <person name="Hauser L."/>
            <person name="Kyrpides N."/>
            <person name="Mikhailova N."/>
            <person name="Brettar I."/>
            <person name="Rodrigues J."/>
            <person name="Konstantinidis K."/>
            <person name="Tiedje J."/>
            <person name="Richardson P."/>
        </authorList>
    </citation>
    <scope>NUCLEOTIDE SEQUENCE [LARGE SCALE GENOMIC DNA]</scope>
    <source>
        <strain>OS185</strain>
    </source>
</reference>
<feature type="chain" id="PRO_1000046707" description="DNA mismatch repair protein MutH">
    <location>
        <begin position="1"/>
        <end position="223"/>
    </location>
</feature>
<accession>A6WKN9</accession>
<protein>
    <recommendedName>
        <fullName evidence="1">DNA mismatch repair protein MutH</fullName>
    </recommendedName>
    <alternativeName>
        <fullName evidence="1">Methyl-directed mismatch repair protein</fullName>
    </alternativeName>
</protein>
<keyword id="KW-0963">Cytoplasm</keyword>
<keyword id="KW-0227">DNA damage</keyword>
<keyword id="KW-0234">DNA repair</keyword>
<keyword id="KW-0255">Endonuclease</keyword>
<keyword id="KW-0378">Hydrolase</keyword>
<keyword id="KW-0540">Nuclease</keyword>
<sequence length="223" mass="24923">MNRIIPPENLPELLERAHMMAGVSLAQIAAQRGLSVPKDLKRDKGWVGQLIEMELGATAGSKPEQDFLHLGVELKTIPIDSQGRPLETTYVCVAPLSNIQGLTWQNSLVCHKLQRVLWVPVEGERHIPVAERRIGTPILWEPDPQELQLLQQDWEEIMELIALGKVEKLTARHGEVLQLRPKAANSKALTQSIAEDGSLKMTNPRGFYLKTSFTAMILNKVFG</sequence>
<comment type="function">
    <text evidence="1">Sequence-specific endonuclease that cleaves unmethylated GATC sequences. It is involved in DNA mismatch repair.</text>
</comment>
<comment type="subcellular location">
    <subcellularLocation>
        <location evidence="1">Cytoplasm</location>
    </subcellularLocation>
</comment>
<comment type="similarity">
    <text evidence="1">Belongs to the MutH family.</text>
</comment>
<proteinExistence type="inferred from homology"/>
<organism>
    <name type="scientific">Shewanella baltica (strain OS185)</name>
    <dbReference type="NCBI Taxonomy" id="402882"/>
    <lineage>
        <taxon>Bacteria</taxon>
        <taxon>Pseudomonadati</taxon>
        <taxon>Pseudomonadota</taxon>
        <taxon>Gammaproteobacteria</taxon>
        <taxon>Alteromonadales</taxon>
        <taxon>Shewanellaceae</taxon>
        <taxon>Shewanella</taxon>
    </lineage>
</organism>
<gene>
    <name evidence="1" type="primary">mutH</name>
    <name type="ordered locus">Shew185_1227</name>
</gene>
<dbReference type="EMBL" id="CP000753">
    <property type="protein sequence ID" value="ABS07378.1"/>
    <property type="molecule type" value="Genomic_DNA"/>
</dbReference>
<dbReference type="RefSeq" id="WP_012088597.1">
    <property type="nucleotide sequence ID" value="NC_009665.1"/>
</dbReference>
<dbReference type="SMR" id="A6WKN9"/>
<dbReference type="KEGG" id="sbm:Shew185_1227"/>
<dbReference type="HOGENOM" id="CLU_086669_0_0_6"/>
<dbReference type="GO" id="GO:0005737">
    <property type="term" value="C:cytoplasm"/>
    <property type="evidence" value="ECO:0007669"/>
    <property type="project" value="UniProtKB-SubCell"/>
</dbReference>
<dbReference type="GO" id="GO:0003677">
    <property type="term" value="F:DNA binding"/>
    <property type="evidence" value="ECO:0007669"/>
    <property type="project" value="InterPro"/>
</dbReference>
<dbReference type="GO" id="GO:0004519">
    <property type="term" value="F:endonuclease activity"/>
    <property type="evidence" value="ECO:0007669"/>
    <property type="project" value="UniProtKB-UniRule"/>
</dbReference>
<dbReference type="GO" id="GO:0006304">
    <property type="term" value="P:DNA modification"/>
    <property type="evidence" value="ECO:0007669"/>
    <property type="project" value="InterPro"/>
</dbReference>
<dbReference type="GO" id="GO:0006298">
    <property type="term" value="P:mismatch repair"/>
    <property type="evidence" value="ECO:0007669"/>
    <property type="project" value="UniProtKB-UniRule"/>
</dbReference>
<dbReference type="CDD" id="cd00583">
    <property type="entry name" value="MutH-like"/>
    <property type="match status" value="1"/>
</dbReference>
<dbReference type="Gene3D" id="3.40.600.10">
    <property type="entry name" value="DNA mismatch repair MutH/Restriction endonuclease, type II"/>
    <property type="match status" value="1"/>
</dbReference>
<dbReference type="HAMAP" id="MF_00759">
    <property type="entry name" value="MutH"/>
    <property type="match status" value="1"/>
</dbReference>
<dbReference type="InterPro" id="IPR004230">
    <property type="entry name" value="DNA_mismatch_repair_MutH"/>
</dbReference>
<dbReference type="InterPro" id="IPR011337">
    <property type="entry name" value="DNA_rep_MutH/RE_typeII_Sau3AI"/>
</dbReference>
<dbReference type="InterPro" id="IPR037057">
    <property type="entry name" value="DNA_rep_MutH/T2_RE_sf"/>
</dbReference>
<dbReference type="InterPro" id="IPR011335">
    <property type="entry name" value="Restrct_endonuc-II-like"/>
</dbReference>
<dbReference type="NCBIfam" id="TIGR02248">
    <property type="entry name" value="mutH_TIGR"/>
    <property type="match status" value="1"/>
</dbReference>
<dbReference type="NCBIfam" id="NF003458">
    <property type="entry name" value="PRK05070.1"/>
    <property type="match status" value="1"/>
</dbReference>
<dbReference type="Pfam" id="PF02976">
    <property type="entry name" value="MutH"/>
    <property type="match status" value="1"/>
</dbReference>
<dbReference type="SMART" id="SM00927">
    <property type="entry name" value="MutH"/>
    <property type="match status" value="1"/>
</dbReference>
<dbReference type="SUPFAM" id="SSF52980">
    <property type="entry name" value="Restriction endonuclease-like"/>
    <property type="match status" value="1"/>
</dbReference>
<evidence type="ECO:0000255" key="1">
    <source>
        <dbReference type="HAMAP-Rule" id="MF_00759"/>
    </source>
</evidence>
<name>MUTH_SHEB8</name>